<feature type="chain" id="PRO_1000148708" description="Protein-export protein SecB">
    <location>
        <begin position="1"/>
        <end position="155"/>
    </location>
</feature>
<proteinExistence type="inferred from homology"/>
<sequence>MSEQNNTEMAFQIQRIYTKDVSFEAPNAPHVFQKDWQPEVKLDLDTASSQLADDVYEVVLRVTVTASLGEETAFLCEVQQAGIFSISGIEGTQMAHCLGAYCPNILFPYARECITSLVSRGTFPQLNLAPVNFDALFMNYLQQQAGEGTEEHQDA</sequence>
<protein>
    <recommendedName>
        <fullName evidence="1">Protein-export protein SecB</fullName>
    </recommendedName>
</protein>
<comment type="function">
    <text evidence="1">One of the proteins required for the normal export of preproteins out of the cell cytoplasm. It is a molecular chaperone that binds to a subset of precursor proteins, maintaining them in a translocation-competent state. It also specifically binds to its receptor SecA.</text>
</comment>
<comment type="subunit">
    <text evidence="1">Homotetramer, a dimer of dimers. One homotetramer interacts with 1 SecA dimer.</text>
</comment>
<comment type="subcellular location">
    <subcellularLocation>
        <location evidence="1">Cytoplasm</location>
    </subcellularLocation>
</comment>
<comment type="similarity">
    <text evidence="1">Belongs to the SecB family.</text>
</comment>
<evidence type="ECO:0000255" key="1">
    <source>
        <dbReference type="HAMAP-Rule" id="MF_00821"/>
    </source>
</evidence>
<name>SECB_SALPC</name>
<keyword id="KW-0143">Chaperone</keyword>
<keyword id="KW-0963">Cytoplasm</keyword>
<keyword id="KW-0653">Protein transport</keyword>
<keyword id="KW-0811">Translocation</keyword>
<keyword id="KW-0813">Transport</keyword>
<accession>C0Q1U3</accession>
<reference key="1">
    <citation type="journal article" date="2009" name="PLoS ONE">
        <title>Salmonella paratyphi C: genetic divergence from Salmonella choleraesuis and pathogenic convergence with Salmonella typhi.</title>
        <authorList>
            <person name="Liu W.-Q."/>
            <person name="Feng Y."/>
            <person name="Wang Y."/>
            <person name="Zou Q.-H."/>
            <person name="Chen F."/>
            <person name="Guo J.-T."/>
            <person name="Peng Y.-H."/>
            <person name="Jin Y."/>
            <person name="Li Y.-G."/>
            <person name="Hu S.-N."/>
            <person name="Johnston R.N."/>
            <person name="Liu G.-R."/>
            <person name="Liu S.-L."/>
        </authorList>
    </citation>
    <scope>NUCLEOTIDE SEQUENCE [LARGE SCALE GENOMIC DNA]</scope>
    <source>
        <strain>RKS4594</strain>
    </source>
</reference>
<organism>
    <name type="scientific">Salmonella paratyphi C (strain RKS4594)</name>
    <dbReference type="NCBI Taxonomy" id="476213"/>
    <lineage>
        <taxon>Bacteria</taxon>
        <taxon>Pseudomonadati</taxon>
        <taxon>Pseudomonadota</taxon>
        <taxon>Gammaproteobacteria</taxon>
        <taxon>Enterobacterales</taxon>
        <taxon>Enterobacteriaceae</taxon>
        <taxon>Salmonella</taxon>
    </lineage>
</organism>
<gene>
    <name evidence="1" type="primary">secB</name>
    <name type="ordered locus">SPC_3783</name>
</gene>
<dbReference type="EMBL" id="CP000857">
    <property type="protein sequence ID" value="ACN47859.1"/>
    <property type="molecule type" value="Genomic_DNA"/>
</dbReference>
<dbReference type="RefSeq" id="WP_000003370.1">
    <property type="nucleotide sequence ID" value="NC_012125.1"/>
</dbReference>
<dbReference type="SMR" id="C0Q1U3"/>
<dbReference type="KEGG" id="sei:SPC_3783"/>
<dbReference type="HOGENOM" id="CLU_111574_1_0_6"/>
<dbReference type="Proteomes" id="UP000001599">
    <property type="component" value="Chromosome"/>
</dbReference>
<dbReference type="GO" id="GO:0005737">
    <property type="term" value="C:cytoplasm"/>
    <property type="evidence" value="ECO:0007669"/>
    <property type="project" value="UniProtKB-SubCell"/>
</dbReference>
<dbReference type="GO" id="GO:0051082">
    <property type="term" value="F:unfolded protein binding"/>
    <property type="evidence" value="ECO:0007669"/>
    <property type="project" value="InterPro"/>
</dbReference>
<dbReference type="GO" id="GO:0006457">
    <property type="term" value="P:protein folding"/>
    <property type="evidence" value="ECO:0007669"/>
    <property type="project" value="UniProtKB-UniRule"/>
</dbReference>
<dbReference type="GO" id="GO:0051262">
    <property type="term" value="P:protein tetramerization"/>
    <property type="evidence" value="ECO:0007669"/>
    <property type="project" value="InterPro"/>
</dbReference>
<dbReference type="GO" id="GO:0015031">
    <property type="term" value="P:protein transport"/>
    <property type="evidence" value="ECO:0007669"/>
    <property type="project" value="UniProtKB-UniRule"/>
</dbReference>
<dbReference type="CDD" id="cd00557">
    <property type="entry name" value="Translocase_SecB"/>
    <property type="match status" value="1"/>
</dbReference>
<dbReference type="FunFam" id="3.10.420.10:FF:000001">
    <property type="entry name" value="Protein-export chaperone SecB"/>
    <property type="match status" value="1"/>
</dbReference>
<dbReference type="Gene3D" id="3.10.420.10">
    <property type="entry name" value="SecB-like"/>
    <property type="match status" value="1"/>
</dbReference>
<dbReference type="HAMAP" id="MF_00821">
    <property type="entry name" value="SecB"/>
    <property type="match status" value="1"/>
</dbReference>
<dbReference type="InterPro" id="IPR003708">
    <property type="entry name" value="SecB"/>
</dbReference>
<dbReference type="InterPro" id="IPR035958">
    <property type="entry name" value="SecB-like_sf"/>
</dbReference>
<dbReference type="NCBIfam" id="NF004390">
    <property type="entry name" value="PRK05751.1-1"/>
    <property type="match status" value="1"/>
</dbReference>
<dbReference type="NCBIfam" id="NF004393">
    <property type="entry name" value="PRK05751.1-4"/>
    <property type="match status" value="1"/>
</dbReference>
<dbReference type="NCBIfam" id="TIGR00809">
    <property type="entry name" value="secB"/>
    <property type="match status" value="1"/>
</dbReference>
<dbReference type="PANTHER" id="PTHR36918">
    <property type="match status" value="1"/>
</dbReference>
<dbReference type="PANTHER" id="PTHR36918:SF1">
    <property type="entry name" value="PROTEIN-EXPORT PROTEIN SECB"/>
    <property type="match status" value="1"/>
</dbReference>
<dbReference type="Pfam" id="PF02556">
    <property type="entry name" value="SecB"/>
    <property type="match status" value="1"/>
</dbReference>
<dbReference type="PRINTS" id="PR01594">
    <property type="entry name" value="SECBCHAPRONE"/>
</dbReference>
<dbReference type="SUPFAM" id="SSF54611">
    <property type="entry name" value="SecB-like"/>
    <property type="match status" value="1"/>
</dbReference>